<comment type="function">
    <text evidence="1">Reversibly transfers an adenylyl group from ATP to 4'-phosphopantetheine, yielding dephospho-CoA (dPCoA) and pyrophosphate.</text>
</comment>
<comment type="catalytic activity">
    <reaction evidence="1">
        <text>(R)-4'-phosphopantetheine + ATP + H(+) = 3'-dephospho-CoA + diphosphate</text>
        <dbReference type="Rhea" id="RHEA:19801"/>
        <dbReference type="ChEBI" id="CHEBI:15378"/>
        <dbReference type="ChEBI" id="CHEBI:30616"/>
        <dbReference type="ChEBI" id="CHEBI:33019"/>
        <dbReference type="ChEBI" id="CHEBI:57328"/>
        <dbReference type="ChEBI" id="CHEBI:61723"/>
        <dbReference type="EC" id="2.7.7.3"/>
    </reaction>
</comment>
<comment type="cofactor">
    <cofactor evidence="1">
        <name>Mg(2+)</name>
        <dbReference type="ChEBI" id="CHEBI:18420"/>
    </cofactor>
</comment>
<comment type="pathway">
    <text evidence="1">Cofactor biosynthesis; coenzyme A biosynthesis; CoA from (R)-pantothenate: step 4/5.</text>
</comment>
<comment type="subunit">
    <text evidence="1">Homohexamer.</text>
</comment>
<comment type="subcellular location">
    <subcellularLocation>
        <location evidence="1">Cytoplasm</location>
    </subcellularLocation>
</comment>
<comment type="similarity">
    <text evidence="1">Belongs to the bacterial CoaD family.</text>
</comment>
<protein>
    <recommendedName>
        <fullName evidence="1">Phosphopantetheine adenylyltransferase</fullName>
        <ecNumber evidence="1">2.7.7.3</ecNumber>
    </recommendedName>
    <alternativeName>
        <fullName evidence="1">Dephospho-CoA pyrophosphorylase</fullName>
    </alternativeName>
    <alternativeName>
        <fullName evidence="1">Pantetheine-phosphate adenylyltransferase</fullName>
        <shortName evidence="1">PPAT</shortName>
    </alternativeName>
</protein>
<reference key="1">
    <citation type="journal article" date="2003" name="Mol. Microbiol.">
        <title>Genome-based analysis of virulence genes in a non-biofilm-forming Staphylococcus epidermidis strain (ATCC 12228).</title>
        <authorList>
            <person name="Zhang Y.-Q."/>
            <person name="Ren S.-X."/>
            <person name="Li H.-L."/>
            <person name="Wang Y.-X."/>
            <person name="Fu G."/>
            <person name="Yang J."/>
            <person name="Qin Z.-Q."/>
            <person name="Miao Y.-G."/>
            <person name="Wang W.-Y."/>
            <person name="Chen R.-S."/>
            <person name="Shen Y."/>
            <person name="Chen Z."/>
            <person name="Yuan Z.-H."/>
            <person name="Zhao G.-P."/>
            <person name="Qu D."/>
            <person name="Danchin A."/>
            <person name="Wen Y.-M."/>
        </authorList>
    </citation>
    <scope>NUCLEOTIDE SEQUENCE [LARGE SCALE GENOMIC DNA]</scope>
    <source>
        <strain>ATCC 12228 / FDA PCI 1200</strain>
    </source>
</reference>
<name>COAD_STAES</name>
<evidence type="ECO:0000255" key="1">
    <source>
        <dbReference type="HAMAP-Rule" id="MF_00151"/>
    </source>
</evidence>
<organism>
    <name type="scientific">Staphylococcus epidermidis (strain ATCC 12228 / FDA PCI 1200)</name>
    <dbReference type="NCBI Taxonomy" id="176280"/>
    <lineage>
        <taxon>Bacteria</taxon>
        <taxon>Bacillati</taxon>
        <taxon>Bacillota</taxon>
        <taxon>Bacilli</taxon>
        <taxon>Bacillales</taxon>
        <taxon>Staphylococcaceae</taxon>
        <taxon>Staphylococcus</taxon>
    </lineage>
</organism>
<dbReference type="EC" id="2.7.7.3" evidence="1"/>
<dbReference type="EMBL" id="AE015929">
    <property type="protein sequence ID" value="AAO04421.1"/>
    <property type="molecule type" value="Genomic_DNA"/>
</dbReference>
<dbReference type="RefSeq" id="NP_764379.1">
    <property type="nucleotide sequence ID" value="NC_004461.1"/>
</dbReference>
<dbReference type="RefSeq" id="WP_001830072.1">
    <property type="nucleotide sequence ID" value="NZ_WBME01000046.1"/>
</dbReference>
<dbReference type="SMR" id="Q8CSZ5"/>
<dbReference type="GeneID" id="50019037"/>
<dbReference type="KEGG" id="sep:SE_0824"/>
<dbReference type="PATRIC" id="fig|176280.10.peg.798"/>
<dbReference type="eggNOG" id="COG0669">
    <property type="taxonomic scope" value="Bacteria"/>
</dbReference>
<dbReference type="HOGENOM" id="CLU_100149_0_1_9"/>
<dbReference type="OrthoDB" id="9806661at2"/>
<dbReference type="UniPathway" id="UPA00241">
    <property type="reaction ID" value="UER00355"/>
</dbReference>
<dbReference type="Proteomes" id="UP000001411">
    <property type="component" value="Chromosome"/>
</dbReference>
<dbReference type="GO" id="GO:0005737">
    <property type="term" value="C:cytoplasm"/>
    <property type="evidence" value="ECO:0007669"/>
    <property type="project" value="UniProtKB-SubCell"/>
</dbReference>
<dbReference type="GO" id="GO:0005524">
    <property type="term" value="F:ATP binding"/>
    <property type="evidence" value="ECO:0007669"/>
    <property type="project" value="UniProtKB-KW"/>
</dbReference>
<dbReference type="GO" id="GO:0004595">
    <property type="term" value="F:pantetheine-phosphate adenylyltransferase activity"/>
    <property type="evidence" value="ECO:0007669"/>
    <property type="project" value="UniProtKB-UniRule"/>
</dbReference>
<dbReference type="GO" id="GO:0015937">
    <property type="term" value="P:coenzyme A biosynthetic process"/>
    <property type="evidence" value="ECO:0007669"/>
    <property type="project" value="UniProtKB-UniRule"/>
</dbReference>
<dbReference type="CDD" id="cd02163">
    <property type="entry name" value="PPAT"/>
    <property type="match status" value="1"/>
</dbReference>
<dbReference type="Gene3D" id="3.40.50.620">
    <property type="entry name" value="HUPs"/>
    <property type="match status" value="1"/>
</dbReference>
<dbReference type="HAMAP" id="MF_00151">
    <property type="entry name" value="PPAT_bact"/>
    <property type="match status" value="1"/>
</dbReference>
<dbReference type="InterPro" id="IPR004821">
    <property type="entry name" value="Cyt_trans-like"/>
</dbReference>
<dbReference type="InterPro" id="IPR001980">
    <property type="entry name" value="PPAT"/>
</dbReference>
<dbReference type="InterPro" id="IPR014729">
    <property type="entry name" value="Rossmann-like_a/b/a_fold"/>
</dbReference>
<dbReference type="NCBIfam" id="TIGR01510">
    <property type="entry name" value="coaD_prev_kdtB"/>
    <property type="match status" value="1"/>
</dbReference>
<dbReference type="NCBIfam" id="TIGR00125">
    <property type="entry name" value="cyt_tran_rel"/>
    <property type="match status" value="1"/>
</dbReference>
<dbReference type="PANTHER" id="PTHR21342">
    <property type="entry name" value="PHOSPHOPANTETHEINE ADENYLYLTRANSFERASE"/>
    <property type="match status" value="1"/>
</dbReference>
<dbReference type="PANTHER" id="PTHR21342:SF1">
    <property type="entry name" value="PHOSPHOPANTETHEINE ADENYLYLTRANSFERASE"/>
    <property type="match status" value="1"/>
</dbReference>
<dbReference type="Pfam" id="PF01467">
    <property type="entry name" value="CTP_transf_like"/>
    <property type="match status" value="1"/>
</dbReference>
<dbReference type="PRINTS" id="PR01020">
    <property type="entry name" value="LPSBIOSNTHSS"/>
</dbReference>
<dbReference type="SUPFAM" id="SSF52374">
    <property type="entry name" value="Nucleotidylyl transferase"/>
    <property type="match status" value="1"/>
</dbReference>
<proteinExistence type="inferred from homology"/>
<accession>Q8CSZ5</accession>
<feature type="chain" id="PRO_0000156277" description="Phosphopantetheine adenylyltransferase">
    <location>
        <begin position="1"/>
        <end position="161"/>
    </location>
</feature>
<feature type="binding site" evidence="1">
    <location>
        <begin position="11"/>
        <end position="12"/>
    </location>
    <ligand>
        <name>ATP</name>
        <dbReference type="ChEBI" id="CHEBI:30616"/>
    </ligand>
</feature>
<feature type="binding site" evidence="1">
    <location>
        <position position="11"/>
    </location>
    <ligand>
        <name>substrate</name>
    </ligand>
</feature>
<feature type="binding site" evidence="1">
    <location>
        <position position="19"/>
    </location>
    <ligand>
        <name>ATP</name>
        <dbReference type="ChEBI" id="CHEBI:30616"/>
    </ligand>
</feature>
<feature type="binding site" evidence="1">
    <location>
        <position position="43"/>
    </location>
    <ligand>
        <name>substrate</name>
    </ligand>
</feature>
<feature type="binding site" evidence="1">
    <location>
        <position position="75"/>
    </location>
    <ligand>
        <name>substrate</name>
    </ligand>
</feature>
<feature type="binding site" evidence="1">
    <location>
        <position position="89"/>
    </location>
    <ligand>
        <name>substrate</name>
    </ligand>
</feature>
<feature type="binding site" evidence="1">
    <location>
        <begin position="90"/>
        <end position="92"/>
    </location>
    <ligand>
        <name>ATP</name>
        <dbReference type="ChEBI" id="CHEBI:30616"/>
    </ligand>
</feature>
<feature type="binding site" evidence="1">
    <location>
        <position position="100"/>
    </location>
    <ligand>
        <name>ATP</name>
        <dbReference type="ChEBI" id="CHEBI:30616"/>
    </ligand>
</feature>
<feature type="binding site" evidence="1">
    <location>
        <begin position="125"/>
        <end position="131"/>
    </location>
    <ligand>
        <name>ATP</name>
        <dbReference type="ChEBI" id="CHEBI:30616"/>
    </ligand>
</feature>
<feature type="site" description="Transition state stabilizer" evidence="1">
    <location>
        <position position="19"/>
    </location>
</feature>
<keyword id="KW-0067">ATP-binding</keyword>
<keyword id="KW-0173">Coenzyme A biosynthesis</keyword>
<keyword id="KW-0963">Cytoplasm</keyword>
<keyword id="KW-0460">Magnesium</keyword>
<keyword id="KW-0547">Nucleotide-binding</keyword>
<keyword id="KW-0548">Nucleotidyltransferase</keyword>
<keyword id="KW-0808">Transferase</keyword>
<sequence length="161" mass="18216">MSKTRAVIPGSFDPITYGHLDIIERSADRFDEIHVCVLKNSSKGGTFDSEERMTLIEESVKHLPNIQVHHFNGLLVDFCDQVGAKTIIRGLRAVSDFEYELRLTSMNKKLNSNIETMYMMTSANYSFISSSIVKEVAAYQADISPFVPPHVERALKKKFNV</sequence>
<gene>
    <name evidence="1" type="primary">coaD</name>
    <name type="ordered locus">SE_0824</name>
</gene>